<name>LEPA_ACIB3</name>
<keyword id="KW-0997">Cell inner membrane</keyword>
<keyword id="KW-1003">Cell membrane</keyword>
<keyword id="KW-0342">GTP-binding</keyword>
<keyword id="KW-0378">Hydrolase</keyword>
<keyword id="KW-0472">Membrane</keyword>
<keyword id="KW-0547">Nucleotide-binding</keyword>
<keyword id="KW-0648">Protein biosynthesis</keyword>
<reference key="1">
    <citation type="journal article" date="2008" name="J. Bacteriol.">
        <title>Comparative genome sequence analysis of multidrug-resistant Acinetobacter baumannii.</title>
        <authorList>
            <person name="Adams M.D."/>
            <person name="Goglin K."/>
            <person name="Molyneaux N."/>
            <person name="Hujer K.M."/>
            <person name="Lavender H."/>
            <person name="Jamison J.J."/>
            <person name="MacDonald I.J."/>
            <person name="Martin K.M."/>
            <person name="Russo T."/>
            <person name="Campagnari A.A."/>
            <person name="Hujer A.M."/>
            <person name="Bonomo R.A."/>
            <person name="Gill S.R."/>
        </authorList>
    </citation>
    <scope>NUCLEOTIDE SEQUENCE [LARGE SCALE GENOMIC DNA]</scope>
    <source>
        <strain>AB307-0294</strain>
    </source>
</reference>
<evidence type="ECO:0000255" key="1">
    <source>
        <dbReference type="HAMAP-Rule" id="MF_00071"/>
    </source>
</evidence>
<organism>
    <name type="scientific">Acinetobacter baumannii (strain AB307-0294)</name>
    <dbReference type="NCBI Taxonomy" id="557600"/>
    <lineage>
        <taxon>Bacteria</taxon>
        <taxon>Pseudomonadati</taxon>
        <taxon>Pseudomonadota</taxon>
        <taxon>Gammaproteobacteria</taxon>
        <taxon>Moraxellales</taxon>
        <taxon>Moraxellaceae</taxon>
        <taxon>Acinetobacter</taxon>
        <taxon>Acinetobacter calcoaceticus/baumannii complex</taxon>
    </lineage>
</organism>
<gene>
    <name evidence="1" type="primary">lepA</name>
    <name type="ordered locus">ABBFA_000923</name>
</gene>
<feature type="chain" id="PRO_1000117010" description="Elongation factor 4">
    <location>
        <begin position="1"/>
        <end position="605"/>
    </location>
</feature>
<feature type="domain" description="tr-type G">
    <location>
        <begin position="11"/>
        <end position="193"/>
    </location>
</feature>
<feature type="binding site" evidence="1">
    <location>
        <begin position="23"/>
        <end position="28"/>
    </location>
    <ligand>
        <name>GTP</name>
        <dbReference type="ChEBI" id="CHEBI:37565"/>
    </ligand>
</feature>
<feature type="binding site" evidence="1">
    <location>
        <begin position="140"/>
        <end position="143"/>
    </location>
    <ligand>
        <name>GTP</name>
        <dbReference type="ChEBI" id="CHEBI:37565"/>
    </ligand>
</feature>
<proteinExistence type="inferred from homology"/>
<dbReference type="EC" id="3.6.5.n1" evidence="1"/>
<dbReference type="EMBL" id="CP001172">
    <property type="protein sequence ID" value="ACJ57032.1"/>
    <property type="molecule type" value="Genomic_DNA"/>
</dbReference>
<dbReference type="RefSeq" id="WP_000035781.1">
    <property type="nucleotide sequence ID" value="NZ_CP001172.1"/>
</dbReference>
<dbReference type="SMR" id="B7GYS7"/>
<dbReference type="GeneID" id="92894832"/>
<dbReference type="HOGENOM" id="CLU_009995_3_3_6"/>
<dbReference type="Proteomes" id="UP000006924">
    <property type="component" value="Chromosome"/>
</dbReference>
<dbReference type="GO" id="GO:0005886">
    <property type="term" value="C:plasma membrane"/>
    <property type="evidence" value="ECO:0007669"/>
    <property type="project" value="UniProtKB-SubCell"/>
</dbReference>
<dbReference type="GO" id="GO:0005525">
    <property type="term" value="F:GTP binding"/>
    <property type="evidence" value="ECO:0007669"/>
    <property type="project" value="UniProtKB-UniRule"/>
</dbReference>
<dbReference type="GO" id="GO:0003924">
    <property type="term" value="F:GTPase activity"/>
    <property type="evidence" value="ECO:0007669"/>
    <property type="project" value="UniProtKB-UniRule"/>
</dbReference>
<dbReference type="GO" id="GO:0097216">
    <property type="term" value="F:guanosine tetraphosphate binding"/>
    <property type="evidence" value="ECO:0007669"/>
    <property type="project" value="UniProtKB-ARBA"/>
</dbReference>
<dbReference type="GO" id="GO:0043022">
    <property type="term" value="F:ribosome binding"/>
    <property type="evidence" value="ECO:0007669"/>
    <property type="project" value="UniProtKB-UniRule"/>
</dbReference>
<dbReference type="GO" id="GO:0003746">
    <property type="term" value="F:translation elongation factor activity"/>
    <property type="evidence" value="ECO:0007669"/>
    <property type="project" value="UniProtKB-UniRule"/>
</dbReference>
<dbReference type="GO" id="GO:0045727">
    <property type="term" value="P:positive regulation of translation"/>
    <property type="evidence" value="ECO:0007669"/>
    <property type="project" value="UniProtKB-UniRule"/>
</dbReference>
<dbReference type="CDD" id="cd03699">
    <property type="entry name" value="EF4_II"/>
    <property type="match status" value="1"/>
</dbReference>
<dbReference type="CDD" id="cd16260">
    <property type="entry name" value="EF4_III"/>
    <property type="match status" value="1"/>
</dbReference>
<dbReference type="CDD" id="cd01890">
    <property type="entry name" value="LepA"/>
    <property type="match status" value="1"/>
</dbReference>
<dbReference type="CDD" id="cd03709">
    <property type="entry name" value="lepA_C"/>
    <property type="match status" value="1"/>
</dbReference>
<dbReference type="FunFam" id="3.40.50.300:FF:000078">
    <property type="entry name" value="Elongation factor 4"/>
    <property type="match status" value="1"/>
</dbReference>
<dbReference type="FunFam" id="2.40.30.10:FF:000015">
    <property type="entry name" value="Translation factor GUF1, mitochondrial"/>
    <property type="match status" value="1"/>
</dbReference>
<dbReference type="FunFam" id="3.30.70.240:FF:000007">
    <property type="entry name" value="Translation factor GUF1, mitochondrial"/>
    <property type="match status" value="1"/>
</dbReference>
<dbReference type="FunFam" id="3.30.70.2570:FF:000001">
    <property type="entry name" value="Translation factor GUF1, mitochondrial"/>
    <property type="match status" value="1"/>
</dbReference>
<dbReference type="FunFam" id="3.30.70.870:FF:000004">
    <property type="entry name" value="Translation factor GUF1, mitochondrial"/>
    <property type="match status" value="1"/>
</dbReference>
<dbReference type="Gene3D" id="3.30.70.240">
    <property type="match status" value="1"/>
</dbReference>
<dbReference type="Gene3D" id="3.30.70.2570">
    <property type="entry name" value="Elongation factor 4, C-terminal domain"/>
    <property type="match status" value="1"/>
</dbReference>
<dbReference type="Gene3D" id="3.30.70.870">
    <property type="entry name" value="Elongation Factor G (Translational Gtpase), domain 3"/>
    <property type="match status" value="1"/>
</dbReference>
<dbReference type="Gene3D" id="3.40.50.300">
    <property type="entry name" value="P-loop containing nucleotide triphosphate hydrolases"/>
    <property type="match status" value="1"/>
</dbReference>
<dbReference type="Gene3D" id="2.40.30.10">
    <property type="entry name" value="Translation factors"/>
    <property type="match status" value="1"/>
</dbReference>
<dbReference type="HAMAP" id="MF_00071">
    <property type="entry name" value="LepA"/>
    <property type="match status" value="1"/>
</dbReference>
<dbReference type="InterPro" id="IPR006297">
    <property type="entry name" value="EF-4"/>
</dbReference>
<dbReference type="InterPro" id="IPR035647">
    <property type="entry name" value="EFG_III/V"/>
</dbReference>
<dbReference type="InterPro" id="IPR000640">
    <property type="entry name" value="EFG_V-like"/>
</dbReference>
<dbReference type="InterPro" id="IPR004161">
    <property type="entry name" value="EFTu-like_2"/>
</dbReference>
<dbReference type="InterPro" id="IPR031157">
    <property type="entry name" value="G_TR_CS"/>
</dbReference>
<dbReference type="InterPro" id="IPR038363">
    <property type="entry name" value="LepA_C_sf"/>
</dbReference>
<dbReference type="InterPro" id="IPR013842">
    <property type="entry name" value="LepA_CTD"/>
</dbReference>
<dbReference type="InterPro" id="IPR035654">
    <property type="entry name" value="LepA_IV"/>
</dbReference>
<dbReference type="InterPro" id="IPR027417">
    <property type="entry name" value="P-loop_NTPase"/>
</dbReference>
<dbReference type="InterPro" id="IPR005225">
    <property type="entry name" value="Small_GTP-bd"/>
</dbReference>
<dbReference type="InterPro" id="IPR000795">
    <property type="entry name" value="T_Tr_GTP-bd_dom"/>
</dbReference>
<dbReference type="NCBIfam" id="TIGR01393">
    <property type="entry name" value="lepA"/>
    <property type="match status" value="1"/>
</dbReference>
<dbReference type="NCBIfam" id="TIGR00231">
    <property type="entry name" value="small_GTP"/>
    <property type="match status" value="1"/>
</dbReference>
<dbReference type="PANTHER" id="PTHR43512:SF4">
    <property type="entry name" value="TRANSLATION FACTOR GUF1 HOMOLOG, CHLOROPLASTIC"/>
    <property type="match status" value="1"/>
</dbReference>
<dbReference type="PANTHER" id="PTHR43512">
    <property type="entry name" value="TRANSLATION FACTOR GUF1-RELATED"/>
    <property type="match status" value="1"/>
</dbReference>
<dbReference type="Pfam" id="PF00679">
    <property type="entry name" value="EFG_C"/>
    <property type="match status" value="1"/>
</dbReference>
<dbReference type="Pfam" id="PF00009">
    <property type="entry name" value="GTP_EFTU"/>
    <property type="match status" value="1"/>
</dbReference>
<dbReference type="Pfam" id="PF03144">
    <property type="entry name" value="GTP_EFTU_D2"/>
    <property type="match status" value="1"/>
</dbReference>
<dbReference type="Pfam" id="PF06421">
    <property type="entry name" value="LepA_C"/>
    <property type="match status" value="1"/>
</dbReference>
<dbReference type="PRINTS" id="PR00315">
    <property type="entry name" value="ELONGATNFCT"/>
</dbReference>
<dbReference type="SMART" id="SM00838">
    <property type="entry name" value="EFG_C"/>
    <property type="match status" value="1"/>
</dbReference>
<dbReference type="SUPFAM" id="SSF54980">
    <property type="entry name" value="EF-G C-terminal domain-like"/>
    <property type="match status" value="2"/>
</dbReference>
<dbReference type="SUPFAM" id="SSF52540">
    <property type="entry name" value="P-loop containing nucleoside triphosphate hydrolases"/>
    <property type="match status" value="1"/>
</dbReference>
<dbReference type="PROSITE" id="PS00301">
    <property type="entry name" value="G_TR_1"/>
    <property type="match status" value="1"/>
</dbReference>
<dbReference type="PROSITE" id="PS51722">
    <property type="entry name" value="G_TR_2"/>
    <property type="match status" value="1"/>
</dbReference>
<accession>B7GYS7</accession>
<comment type="function">
    <text evidence="1">Required for accurate and efficient protein synthesis under certain stress conditions. May act as a fidelity factor of the translation reaction, by catalyzing a one-codon backward translocation of tRNAs on improperly translocated ribosomes. Back-translocation proceeds from a post-translocation (POST) complex to a pre-translocation (PRE) complex, thus giving elongation factor G a second chance to translocate the tRNAs correctly. Binds to ribosomes in a GTP-dependent manner.</text>
</comment>
<comment type="catalytic activity">
    <reaction evidence="1">
        <text>GTP + H2O = GDP + phosphate + H(+)</text>
        <dbReference type="Rhea" id="RHEA:19669"/>
        <dbReference type="ChEBI" id="CHEBI:15377"/>
        <dbReference type="ChEBI" id="CHEBI:15378"/>
        <dbReference type="ChEBI" id="CHEBI:37565"/>
        <dbReference type="ChEBI" id="CHEBI:43474"/>
        <dbReference type="ChEBI" id="CHEBI:58189"/>
        <dbReference type="EC" id="3.6.5.n1"/>
    </reaction>
</comment>
<comment type="subcellular location">
    <subcellularLocation>
        <location evidence="1">Cell inner membrane</location>
        <topology evidence="1">Peripheral membrane protein</topology>
        <orientation evidence="1">Cytoplasmic side</orientation>
    </subcellularLocation>
</comment>
<comment type="similarity">
    <text evidence="1">Belongs to the TRAFAC class translation factor GTPase superfamily. Classic translation factor GTPase family. LepA subfamily.</text>
</comment>
<protein>
    <recommendedName>
        <fullName evidence="1">Elongation factor 4</fullName>
        <shortName evidence="1">EF-4</shortName>
        <ecNumber evidence="1">3.6.5.n1</ecNumber>
    </recommendedName>
    <alternativeName>
        <fullName evidence="1">Ribosomal back-translocase LepA</fullName>
    </alternativeName>
</protein>
<sequence>MAQAKKSVDIKNIRNFSIIAHIDHGKSTLADRFIQMCGGLQDREMQAQVLDSMELERERGITIKAASVTLYYTHPNGQEYQLNFIDTPGHVDFSYEVSRSLAACEGALLVVDAAQGVEAQSVANCYTAIEQGLEVLPILNKIDLPQAEPERVIHEIEEIIGIEATNAPTCSAKTGLGVEGVLETLVDVIPAPTGDREAPLQALIIDSWFDNYLGVVSLVRIKDGRIRKGDKMLVKSTGQTHIVTSVGVFNPKHTETGVLEAGEVGFVIAGIKDIFGAPVGDTITLSTTPEVASLPGFKKVKPQVYAGLFPIDASDFEPFREALQKLQINDSALFFEPESSDALGFGFRCGFLGMLHMEIVQERLEREYDLDLISSAPTVVYEAVTKKGDTIYIDSPSKMPDGSVVEDLREPIAECHILVPQEYLGNVMTLCIERRGVQKDMKFLGNQVSITFEIPMAEVVMDFFDKLKSCSRGFASLDYNFIRFESSSLVKVDVLINGEKVDALAMICHRNDARHRGIALVEKMKDLIPRQMFDVAIQAAIGAQIIARSTVKAMRKNVLAKCYGGDVSRKKKLLAKQKEGKKRMKQVGSVEIPQEAFLAVLKVER</sequence>